<reference key="1">
    <citation type="journal article" date="2009" name="Genome Res.">
        <title>Comparative genomics of protoploid Saccharomycetaceae.</title>
        <authorList>
            <consortium name="The Genolevures Consortium"/>
            <person name="Souciet J.-L."/>
            <person name="Dujon B."/>
            <person name="Gaillardin C."/>
            <person name="Johnston M."/>
            <person name="Baret P.V."/>
            <person name="Cliften P."/>
            <person name="Sherman D.J."/>
            <person name="Weissenbach J."/>
            <person name="Westhof E."/>
            <person name="Wincker P."/>
            <person name="Jubin C."/>
            <person name="Poulain J."/>
            <person name="Barbe V."/>
            <person name="Segurens B."/>
            <person name="Artiguenave F."/>
            <person name="Anthouard V."/>
            <person name="Vacherie B."/>
            <person name="Val M.-E."/>
            <person name="Fulton R.S."/>
            <person name="Minx P."/>
            <person name="Wilson R."/>
            <person name="Durrens P."/>
            <person name="Jean G."/>
            <person name="Marck C."/>
            <person name="Martin T."/>
            <person name="Nikolski M."/>
            <person name="Rolland T."/>
            <person name="Seret M.-L."/>
            <person name="Casaregola S."/>
            <person name="Despons L."/>
            <person name="Fairhead C."/>
            <person name="Fischer G."/>
            <person name="Lafontaine I."/>
            <person name="Leh V."/>
            <person name="Lemaire M."/>
            <person name="de Montigny J."/>
            <person name="Neuveglise C."/>
            <person name="Thierry A."/>
            <person name="Blanc-Lenfle I."/>
            <person name="Bleykasten C."/>
            <person name="Diffels J."/>
            <person name="Fritsch E."/>
            <person name="Frangeul L."/>
            <person name="Goeffon A."/>
            <person name="Jauniaux N."/>
            <person name="Kachouri-Lafond R."/>
            <person name="Payen C."/>
            <person name="Potier S."/>
            <person name="Pribylova L."/>
            <person name="Ozanne C."/>
            <person name="Richard G.-F."/>
            <person name="Sacerdot C."/>
            <person name="Straub M.-L."/>
            <person name="Talla E."/>
        </authorList>
    </citation>
    <scope>NUCLEOTIDE SEQUENCE [LARGE SCALE GENOMIC DNA]</scope>
    <source>
        <strain>ATCC 56472 / CBS 6340 / NRRL Y-8284</strain>
    </source>
</reference>
<sequence>MSSRRQKTSVACINCSKSHVTCQAERPCSRCVKKGLEATCVDAPRKRRKYLADVPDEQLPVAVKRGNIHEEQQLSNENRYIAHKPRFMSNAADLEYSILSDIIQQDTLLSKIPMDLLYSRDGAKDEESQYNTPNSASSVPSLGAQGRPPSARRTGSPVDSQRVKYATLLGPRGRQALKTEVDLFTTHFPLLPQEVNNSRFRRRIHFDANVRQYYLNDKTTFPEILDQIEPKPKSISLALDISSPDARAVQNFPDVPHSLRYATPMEIYTLISKPFSHTSGFHSLLQYLRSRFNREDIVEMCRSLAEFRPTFIAIAVTLTEEDMIFMEQCYQRTLLEYDQFISQMGTPTCVWRRNGQVSYVNDEFSLLTGWTRADLLFKMTFIVELMDDESVREYFKTFNRVAYRDFKGSERMKTCKLLTPFRGREVECCCIWTLKRDVFGLPLMIIGNFMPIIGQS</sequence>
<gene>
    <name type="primary">ERT1</name>
    <name type="ordered locus">KLTH0H05764g</name>
</gene>
<keyword id="KW-0010">Activator</keyword>
<keyword id="KW-0238">DNA-binding</keyword>
<keyword id="KW-0312">Gluconeogenesis</keyword>
<keyword id="KW-0479">Metal-binding</keyword>
<keyword id="KW-0539">Nucleus</keyword>
<keyword id="KW-1185">Reference proteome</keyword>
<keyword id="KW-0804">Transcription</keyword>
<keyword id="KW-0805">Transcription regulation</keyword>
<keyword id="KW-0862">Zinc</keyword>
<dbReference type="EMBL" id="CU928180">
    <property type="protein sequence ID" value="CAR30268.1"/>
    <property type="molecule type" value="Genomic_DNA"/>
</dbReference>
<dbReference type="RefSeq" id="XP_002556130.1">
    <property type="nucleotide sequence ID" value="XM_002556084.1"/>
</dbReference>
<dbReference type="SMR" id="C5E2K7"/>
<dbReference type="FunCoup" id="C5E2K7">
    <property type="interactions" value="278"/>
</dbReference>
<dbReference type="GeneID" id="8294445"/>
<dbReference type="KEGG" id="lth:KLTH0H05764g"/>
<dbReference type="eggNOG" id="ENOG502R1M5">
    <property type="taxonomic scope" value="Eukaryota"/>
</dbReference>
<dbReference type="HOGENOM" id="CLU_010748_2_3_1"/>
<dbReference type="InParanoid" id="C5E2K7"/>
<dbReference type="OMA" id="VMTTCKL"/>
<dbReference type="OrthoDB" id="2538135at2759"/>
<dbReference type="Proteomes" id="UP000002036">
    <property type="component" value="Chromosome H"/>
</dbReference>
<dbReference type="GO" id="GO:0005634">
    <property type="term" value="C:nucleus"/>
    <property type="evidence" value="ECO:0007669"/>
    <property type="project" value="UniProtKB-SubCell"/>
</dbReference>
<dbReference type="GO" id="GO:0000981">
    <property type="term" value="F:DNA-binding transcription factor activity, RNA polymerase II-specific"/>
    <property type="evidence" value="ECO:0007669"/>
    <property type="project" value="InterPro"/>
</dbReference>
<dbReference type="GO" id="GO:0000977">
    <property type="term" value="F:RNA polymerase II transcription regulatory region sequence-specific DNA binding"/>
    <property type="evidence" value="ECO:0007669"/>
    <property type="project" value="TreeGrafter"/>
</dbReference>
<dbReference type="GO" id="GO:0008270">
    <property type="term" value="F:zinc ion binding"/>
    <property type="evidence" value="ECO:0007669"/>
    <property type="project" value="InterPro"/>
</dbReference>
<dbReference type="GO" id="GO:0009267">
    <property type="term" value="P:cellular response to starvation"/>
    <property type="evidence" value="ECO:0007669"/>
    <property type="project" value="TreeGrafter"/>
</dbReference>
<dbReference type="GO" id="GO:0006094">
    <property type="term" value="P:gluconeogenesis"/>
    <property type="evidence" value="ECO:0007669"/>
    <property type="project" value="UniProtKB-KW"/>
</dbReference>
<dbReference type="CDD" id="cd00067">
    <property type="entry name" value="GAL4"/>
    <property type="match status" value="1"/>
</dbReference>
<dbReference type="CDD" id="cd00130">
    <property type="entry name" value="PAS"/>
    <property type="match status" value="1"/>
</dbReference>
<dbReference type="Gene3D" id="4.10.240.10">
    <property type="entry name" value="Zn(2)-C6 fungal-type DNA-binding domain"/>
    <property type="match status" value="1"/>
</dbReference>
<dbReference type="InterPro" id="IPR050335">
    <property type="entry name" value="ERT1_acuK_gluconeogen_tf"/>
</dbReference>
<dbReference type="InterPro" id="IPR000014">
    <property type="entry name" value="PAS"/>
</dbReference>
<dbReference type="InterPro" id="IPR035965">
    <property type="entry name" value="PAS-like_dom_sf"/>
</dbReference>
<dbReference type="InterPro" id="IPR056751">
    <property type="entry name" value="PAS_13"/>
</dbReference>
<dbReference type="InterPro" id="IPR036864">
    <property type="entry name" value="Zn2-C6_fun-type_DNA-bd_sf"/>
</dbReference>
<dbReference type="InterPro" id="IPR001138">
    <property type="entry name" value="Zn2Cys6_DnaBD"/>
</dbReference>
<dbReference type="PANTHER" id="PTHR47659:SF1">
    <property type="entry name" value="TRANSCRIPTION ACTIVATOR OF GLUCONEOGENESIS ERT1"/>
    <property type="match status" value="1"/>
</dbReference>
<dbReference type="PANTHER" id="PTHR47659">
    <property type="entry name" value="ZN(II)2CYS6 TRANSCRIPTION FACTOR (EUROFUNG)-RELATED"/>
    <property type="match status" value="1"/>
</dbReference>
<dbReference type="Pfam" id="PF24990">
    <property type="entry name" value="PAS_13"/>
    <property type="match status" value="2"/>
</dbReference>
<dbReference type="Pfam" id="PF00172">
    <property type="entry name" value="Zn_clus"/>
    <property type="match status" value="1"/>
</dbReference>
<dbReference type="SMART" id="SM00066">
    <property type="entry name" value="GAL4"/>
    <property type="match status" value="1"/>
</dbReference>
<dbReference type="SUPFAM" id="SSF55785">
    <property type="entry name" value="PYP-like sensor domain (PAS domain)"/>
    <property type="match status" value="1"/>
</dbReference>
<dbReference type="SUPFAM" id="SSF57701">
    <property type="entry name" value="Zn2/Cys6 DNA-binding domain"/>
    <property type="match status" value="1"/>
</dbReference>
<dbReference type="PROSITE" id="PS50112">
    <property type="entry name" value="PAS"/>
    <property type="match status" value="1"/>
</dbReference>
<dbReference type="PROSITE" id="PS00463">
    <property type="entry name" value="ZN2_CY6_FUNGAL_1"/>
    <property type="match status" value="1"/>
</dbReference>
<dbReference type="PROSITE" id="PS50048">
    <property type="entry name" value="ZN2_CY6_FUNGAL_2"/>
    <property type="match status" value="1"/>
</dbReference>
<protein>
    <recommendedName>
        <fullName>Transcription activator of gluconeogenesis ERT1</fullName>
    </recommendedName>
</protein>
<accession>C5E2K7</accession>
<comment type="function">
    <text evidence="1">Transcription factor which regulates nonfermentable carbon utilization. Activator of gluconeogenetic genes (By similarity).</text>
</comment>
<comment type="subcellular location">
    <subcellularLocation>
        <location evidence="3">Nucleus</location>
    </subcellularLocation>
</comment>
<comment type="similarity">
    <text evidence="5">Belongs to the ERT1/acuK family.</text>
</comment>
<evidence type="ECO:0000250" key="1"/>
<evidence type="ECO:0000255" key="2">
    <source>
        <dbReference type="PROSITE-ProRule" id="PRU00140"/>
    </source>
</evidence>
<evidence type="ECO:0000255" key="3">
    <source>
        <dbReference type="PROSITE-ProRule" id="PRU00227"/>
    </source>
</evidence>
<evidence type="ECO:0000256" key="4">
    <source>
        <dbReference type="SAM" id="MobiDB-lite"/>
    </source>
</evidence>
<evidence type="ECO:0000305" key="5"/>
<proteinExistence type="inferred from homology"/>
<name>ERT1_LACTC</name>
<organism>
    <name type="scientific">Lachancea thermotolerans (strain ATCC 56472 / CBS 6340 / NRRL Y-8284)</name>
    <name type="common">Yeast</name>
    <name type="synonym">Kluyveromyces thermotolerans</name>
    <dbReference type="NCBI Taxonomy" id="559295"/>
    <lineage>
        <taxon>Eukaryota</taxon>
        <taxon>Fungi</taxon>
        <taxon>Dikarya</taxon>
        <taxon>Ascomycota</taxon>
        <taxon>Saccharomycotina</taxon>
        <taxon>Saccharomycetes</taxon>
        <taxon>Saccharomycetales</taxon>
        <taxon>Saccharomycetaceae</taxon>
        <taxon>Lachancea</taxon>
    </lineage>
</organism>
<feature type="chain" id="PRO_0000406464" description="Transcription activator of gluconeogenesis ERT1">
    <location>
        <begin position="1"/>
        <end position="456"/>
    </location>
</feature>
<feature type="domain" description="PAS" evidence="2">
    <location>
        <begin position="333"/>
        <end position="405"/>
    </location>
</feature>
<feature type="DNA-binding region" description="Zn(2)-C6 fungal-type" evidence="3">
    <location>
        <begin position="12"/>
        <end position="40"/>
    </location>
</feature>
<feature type="region of interest" description="Disordered" evidence="4">
    <location>
        <begin position="123"/>
        <end position="160"/>
    </location>
</feature>
<feature type="compositionally biased region" description="Polar residues" evidence="4">
    <location>
        <begin position="129"/>
        <end position="140"/>
    </location>
</feature>